<reference key="1">
    <citation type="journal article" date="2009" name="J. Bacteriol.">
        <title>Complete and draft genome sequences of six members of the Aquificales.</title>
        <authorList>
            <person name="Reysenbach A.-L."/>
            <person name="Hamamura N."/>
            <person name="Podar M."/>
            <person name="Griffiths E."/>
            <person name="Ferreira S."/>
            <person name="Hochstein R."/>
            <person name="Heidelberg J."/>
            <person name="Johnson J."/>
            <person name="Mead D."/>
            <person name="Pohorille A."/>
            <person name="Sarmiento M."/>
            <person name="Schweighofer K."/>
            <person name="Seshadri R."/>
            <person name="Voytek M.A."/>
        </authorList>
    </citation>
    <scope>NUCLEOTIDE SEQUENCE [LARGE SCALE GENOMIC DNA]</scope>
    <source>
        <strain>YO3AOP1</strain>
    </source>
</reference>
<accession>B2V6V8</accession>
<gene>
    <name evidence="1" type="primary">rplI</name>
    <name type="ordered locus">SYO3AOP1_1692</name>
</gene>
<protein>
    <recommendedName>
        <fullName evidence="1">Large ribosomal subunit protein bL9</fullName>
    </recommendedName>
    <alternativeName>
        <fullName evidence="2">50S ribosomal protein L9</fullName>
    </alternativeName>
</protein>
<evidence type="ECO:0000255" key="1">
    <source>
        <dbReference type="HAMAP-Rule" id="MF_00503"/>
    </source>
</evidence>
<evidence type="ECO:0000305" key="2"/>
<organism>
    <name type="scientific">Sulfurihydrogenibium sp. (strain YO3AOP1)</name>
    <dbReference type="NCBI Taxonomy" id="436114"/>
    <lineage>
        <taxon>Bacteria</taxon>
        <taxon>Pseudomonadati</taxon>
        <taxon>Aquificota</taxon>
        <taxon>Aquificia</taxon>
        <taxon>Aquificales</taxon>
        <taxon>Hydrogenothermaceae</taxon>
        <taxon>Sulfurihydrogenibium</taxon>
    </lineage>
</organism>
<sequence>MKVVLTKDVEGWGTIGDVIEVKKGFARNYLIPRGLALELTEENKRFIDNILAQKARKLQREKEKAFELAKKLNGVEIEIERPIGVTGKMYGSVTTSDITEKLKEKELEVDKKKIMLRSPIRNLGSYNIQVKLHPEVSATIKVHVVPESK</sequence>
<name>RL9_SULSY</name>
<keyword id="KW-0687">Ribonucleoprotein</keyword>
<keyword id="KW-0689">Ribosomal protein</keyword>
<keyword id="KW-0694">RNA-binding</keyword>
<keyword id="KW-0699">rRNA-binding</keyword>
<proteinExistence type="inferred from homology"/>
<comment type="function">
    <text evidence="1">Binds to the 23S rRNA.</text>
</comment>
<comment type="similarity">
    <text evidence="1">Belongs to the bacterial ribosomal protein bL9 family.</text>
</comment>
<dbReference type="EMBL" id="CP001080">
    <property type="protein sequence ID" value="ACD67290.1"/>
    <property type="molecule type" value="Genomic_DNA"/>
</dbReference>
<dbReference type="RefSeq" id="WP_012460346.1">
    <property type="nucleotide sequence ID" value="NC_010730.1"/>
</dbReference>
<dbReference type="SMR" id="B2V6V8"/>
<dbReference type="STRING" id="436114.SYO3AOP1_1692"/>
<dbReference type="KEGG" id="sul:SYO3AOP1_1692"/>
<dbReference type="eggNOG" id="COG0359">
    <property type="taxonomic scope" value="Bacteria"/>
</dbReference>
<dbReference type="HOGENOM" id="CLU_078938_3_0_0"/>
<dbReference type="GO" id="GO:1990904">
    <property type="term" value="C:ribonucleoprotein complex"/>
    <property type="evidence" value="ECO:0007669"/>
    <property type="project" value="UniProtKB-KW"/>
</dbReference>
<dbReference type="GO" id="GO:0005840">
    <property type="term" value="C:ribosome"/>
    <property type="evidence" value="ECO:0007669"/>
    <property type="project" value="UniProtKB-KW"/>
</dbReference>
<dbReference type="GO" id="GO:0019843">
    <property type="term" value="F:rRNA binding"/>
    <property type="evidence" value="ECO:0007669"/>
    <property type="project" value="UniProtKB-UniRule"/>
</dbReference>
<dbReference type="GO" id="GO:0003735">
    <property type="term" value="F:structural constituent of ribosome"/>
    <property type="evidence" value="ECO:0007669"/>
    <property type="project" value="InterPro"/>
</dbReference>
<dbReference type="GO" id="GO:0006412">
    <property type="term" value="P:translation"/>
    <property type="evidence" value="ECO:0007669"/>
    <property type="project" value="UniProtKB-UniRule"/>
</dbReference>
<dbReference type="Gene3D" id="3.10.430.100">
    <property type="entry name" value="Ribosomal protein L9, C-terminal domain"/>
    <property type="match status" value="1"/>
</dbReference>
<dbReference type="Gene3D" id="3.40.5.10">
    <property type="entry name" value="Ribosomal protein L9, N-terminal domain"/>
    <property type="match status" value="1"/>
</dbReference>
<dbReference type="HAMAP" id="MF_00503">
    <property type="entry name" value="Ribosomal_bL9"/>
    <property type="match status" value="1"/>
</dbReference>
<dbReference type="InterPro" id="IPR000244">
    <property type="entry name" value="Ribosomal_bL9"/>
</dbReference>
<dbReference type="InterPro" id="IPR009027">
    <property type="entry name" value="Ribosomal_bL9/RNase_H1_N"/>
</dbReference>
<dbReference type="InterPro" id="IPR020594">
    <property type="entry name" value="Ribosomal_bL9_bac/chp"/>
</dbReference>
<dbReference type="InterPro" id="IPR020069">
    <property type="entry name" value="Ribosomal_bL9_C"/>
</dbReference>
<dbReference type="InterPro" id="IPR036791">
    <property type="entry name" value="Ribosomal_bL9_C_sf"/>
</dbReference>
<dbReference type="InterPro" id="IPR020070">
    <property type="entry name" value="Ribosomal_bL9_N"/>
</dbReference>
<dbReference type="InterPro" id="IPR036935">
    <property type="entry name" value="Ribosomal_bL9_N_sf"/>
</dbReference>
<dbReference type="NCBIfam" id="TIGR00158">
    <property type="entry name" value="L9"/>
    <property type="match status" value="1"/>
</dbReference>
<dbReference type="PANTHER" id="PTHR21368">
    <property type="entry name" value="50S RIBOSOMAL PROTEIN L9"/>
    <property type="match status" value="1"/>
</dbReference>
<dbReference type="Pfam" id="PF03948">
    <property type="entry name" value="Ribosomal_L9_C"/>
    <property type="match status" value="1"/>
</dbReference>
<dbReference type="Pfam" id="PF01281">
    <property type="entry name" value="Ribosomal_L9_N"/>
    <property type="match status" value="1"/>
</dbReference>
<dbReference type="SUPFAM" id="SSF55658">
    <property type="entry name" value="L9 N-domain-like"/>
    <property type="match status" value="1"/>
</dbReference>
<dbReference type="SUPFAM" id="SSF55653">
    <property type="entry name" value="Ribosomal protein L9 C-domain"/>
    <property type="match status" value="1"/>
</dbReference>
<dbReference type="PROSITE" id="PS00651">
    <property type="entry name" value="RIBOSOMAL_L9"/>
    <property type="match status" value="1"/>
</dbReference>
<feature type="chain" id="PRO_1000126982" description="Large ribosomal subunit protein bL9">
    <location>
        <begin position="1"/>
        <end position="149"/>
    </location>
</feature>